<evidence type="ECO:0000255" key="1">
    <source>
        <dbReference type="HAMAP-Rule" id="MF_00335"/>
    </source>
</evidence>
<evidence type="ECO:0000255" key="2">
    <source>
        <dbReference type="PROSITE-ProRule" id="PRU01175"/>
    </source>
</evidence>
<dbReference type="EC" id="3.1.-.-" evidence="1"/>
<dbReference type="EMBL" id="AF222894">
    <property type="protein sequence ID" value="AAF30490.1"/>
    <property type="molecule type" value="Genomic_DNA"/>
</dbReference>
<dbReference type="RefSeq" id="WP_006688749.1">
    <property type="nucleotide sequence ID" value="NC_002162.1"/>
</dbReference>
<dbReference type="SMR" id="Q9PR60"/>
<dbReference type="STRING" id="273119.UU085"/>
<dbReference type="EnsemblBacteria" id="AAF30490">
    <property type="protein sequence ID" value="AAF30490"/>
    <property type="gene ID" value="UU085"/>
</dbReference>
<dbReference type="GeneID" id="29672747"/>
<dbReference type="KEGG" id="uur:UU085"/>
<dbReference type="eggNOG" id="COG1418">
    <property type="taxonomic scope" value="Bacteria"/>
</dbReference>
<dbReference type="HOGENOM" id="CLU_028328_1_0_14"/>
<dbReference type="OrthoDB" id="9803205at2"/>
<dbReference type="Proteomes" id="UP000000423">
    <property type="component" value="Chromosome"/>
</dbReference>
<dbReference type="GO" id="GO:0005886">
    <property type="term" value="C:plasma membrane"/>
    <property type="evidence" value="ECO:0007669"/>
    <property type="project" value="UniProtKB-SubCell"/>
</dbReference>
<dbReference type="GO" id="GO:0003723">
    <property type="term" value="F:RNA binding"/>
    <property type="evidence" value="ECO:0007669"/>
    <property type="project" value="UniProtKB-UniRule"/>
</dbReference>
<dbReference type="GO" id="GO:0004521">
    <property type="term" value="F:RNA endonuclease activity"/>
    <property type="evidence" value="ECO:0007669"/>
    <property type="project" value="UniProtKB-UniRule"/>
</dbReference>
<dbReference type="GO" id="GO:0006402">
    <property type="term" value="P:mRNA catabolic process"/>
    <property type="evidence" value="ECO:0007669"/>
    <property type="project" value="UniProtKB-UniRule"/>
</dbReference>
<dbReference type="CDD" id="cd00077">
    <property type="entry name" value="HDc"/>
    <property type="match status" value="1"/>
</dbReference>
<dbReference type="CDD" id="cd22431">
    <property type="entry name" value="KH-I_RNaseY"/>
    <property type="match status" value="1"/>
</dbReference>
<dbReference type="Gene3D" id="1.10.3210.10">
    <property type="entry name" value="Hypothetical protein af1432"/>
    <property type="match status" value="1"/>
</dbReference>
<dbReference type="HAMAP" id="MF_00335">
    <property type="entry name" value="RNase_Y"/>
    <property type="match status" value="1"/>
</dbReference>
<dbReference type="InterPro" id="IPR051094">
    <property type="entry name" value="Diverse_Catalytic_Enzymes"/>
</dbReference>
<dbReference type="InterPro" id="IPR003607">
    <property type="entry name" value="HD/PDEase_dom"/>
</dbReference>
<dbReference type="InterPro" id="IPR006674">
    <property type="entry name" value="HD_domain"/>
</dbReference>
<dbReference type="InterPro" id="IPR006675">
    <property type="entry name" value="HDIG_dom"/>
</dbReference>
<dbReference type="InterPro" id="IPR036612">
    <property type="entry name" value="KH_dom_type_1_sf"/>
</dbReference>
<dbReference type="InterPro" id="IPR017705">
    <property type="entry name" value="Ribonuclease_Y"/>
</dbReference>
<dbReference type="NCBIfam" id="TIGR00277">
    <property type="entry name" value="HDIG"/>
    <property type="match status" value="1"/>
</dbReference>
<dbReference type="NCBIfam" id="NF009347">
    <property type="entry name" value="PRK12705.1-4"/>
    <property type="match status" value="1"/>
</dbReference>
<dbReference type="PANTHER" id="PTHR35795:SF1">
    <property type="entry name" value="BIS(5'-NUCLEOSYL)-TETRAPHOSPHATASE, SYMMETRICAL"/>
    <property type="match status" value="1"/>
</dbReference>
<dbReference type="PANTHER" id="PTHR35795">
    <property type="entry name" value="SLR1885 PROTEIN"/>
    <property type="match status" value="1"/>
</dbReference>
<dbReference type="Pfam" id="PF01966">
    <property type="entry name" value="HD"/>
    <property type="match status" value="1"/>
</dbReference>
<dbReference type="SMART" id="SM00471">
    <property type="entry name" value="HDc"/>
    <property type="match status" value="1"/>
</dbReference>
<dbReference type="SUPFAM" id="SSF54791">
    <property type="entry name" value="Eukaryotic type KH-domain (KH-domain type I)"/>
    <property type="match status" value="1"/>
</dbReference>
<dbReference type="SUPFAM" id="SSF109604">
    <property type="entry name" value="HD-domain/PDEase-like"/>
    <property type="match status" value="1"/>
</dbReference>
<dbReference type="PROSITE" id="PS51831">
    <property type="entry name" value="HD"/>
    <property type="match status" value="1"/>
</dbReference>
<gene>
    <name evidence="1" type="primary">rny</name>
    <name type="ordered locus">UU085</name>
</gene>
<comment type="function">
    <text evidence="1">Endoribonuclease that initiates mRNA decay.</text>
</comment>
<comment type="subcellular location">
    <subcellularLocation>
        <location evidence="1">Cell membrane</location>
        <topology evidence="1">Single-pass membrane protein</topology>
    </subcellularLocation>
</comment>
<comment type="similarity">
    <text evidence="1">Belongs to the RNase Y family.</text>
</comment>
<proteinExistence type="inferred from homology"/>
<feature type="chain" id="PRO_0000163806" description="Ribonuclease Y">
    <location>
        <begin position="1"/>
        <end position="473"/>
    </location>
</feature>
<feature type="transmembrane region" description="Helical" evidence="1">
    <location>
        <begin position="4"/>
        <end position="24"/>
    </location>
</feature>
<feature type="domain" description="KH" evidence="1">
    <location>
        <begin position="158"/>
        <end position="218"/>
    </location>
</feature>
<feature type="domain" description="HD" evidence="2">
    <location>
        <begin position="285"/>
        <end position="378"/>
    </location>
</feature>
<name>RNY_UREPA</name>
<keyword id="KW-1003">Cell membrane</keyword>
<keyword id="KW-0255">Endonuclease</keyword>
<keyword id="KW-0378">Hydrolase</keyword>
<keyword id="KW-0472">Membrane</keyword>
<keyword id="KW-0540">Nuclease</keyword>
<keyword id="KW-1185">Reference proteome</keyword>
<keyword id="KW-0694">RNA-binding</keyword>
<keyword id="KW-0812">Transmembrane</keyword>
<keyword id="KW-1133">Transmembrane helix</keyword>
<protein>
    <recommendedName>
        <fullName evidence="1">Ribonuclease Y</fullName>
        <shortName evidence="1">RNase Y</shortName>
        <ecNumber evidence="1">3.1.-.-</ecNumber>
    </recommendedName>
</protein>
<organism>
    <name type="scientific">Ureaplasma parvum serovar 3 (strain ATCC 700970)</name>
    <dbReference type="NCBI Taxonomy" id="273119"/>
    <lineage>
        <taxon>Bacteria</taxon>
        <taxon>Bacillati</taxon>
        <taxon>Mycoplasmatota</taxon>
        <taxon>Mycoplasmoidales</taxon>
        <taxon>Mycoplasmoidaceae</taxon>
        <taxon>Ureaplasma</taxon>
    </lineage>
</organism>
<sequence>MGYLIAFIILLILFVLLITIVPVVMVVYLKKKQLKLTFVPKSQTSFKKIVQKTKDLEEECEDLNNKNNELKKAISDQNLQIDLLKKNNENFLLNATSLTAEQAKKELFNLLKIKFKKELAQEYAKIKHEFNEAQEIYAQNILVETMEQIAEPLIVERSLFNIDIIDENLKGKIIGRDGRNKAVFENEGGVDLIVDRQQPIVGISTPNPIRREIARIVMQKLIDSKNIDINRIELLFKEEREKFEKKVFEIGKNVVEQTLGFFDLPEGIYSYIGRMKFRNSYGQNILSHSLEVAEYAERIAKLINIDPIKAKKAAFFHDIGKTIDFESDLDHVEAGLLIAKKFNLDDYIYNAIESHHNKVIPTTIYGALVKIVDTLSAARPGARVNSYDEYYSRVKELETICMRFEGVKSAYVIKSGRQLRVIVDSNLVSDEQLELLGHEIKVAIEENDLLTNYKIKIVLIKEKRISIDTNIIG</sequence>
<reference key="1">
    <citation type="journal article" date="2000" name="Nature">
        <title>The complete sequence of the mucosal pathogen Ureaplasma urealyticum.</title>
        <authorList>
            <person name="Glass J.I."/>
            <person name="Lefkowitz E.J."/>
            <person name="Glass J.S."/>
            <person name="Heiner C.R."/>
            <person name="Chen E.Y."/>
            <person name="Cassell G.H."/>
        </authorList>
    </citation>
    <scope>NUCLEOTIDE SEQUENCE [LARGE SCALE GENOMIC DNA]</scope>
    <source>
        <strain>ATCC 700970</strain>
    </source>
</reference>
<accession>Q9PR60</accession>